<geneLocation type="chloroplast"/>
<reference key="1">
    <citation type="submission" date="2008-03" db="EMBL/GenBank/DDBJ databases">
        <title>Guizotia abyssinica chloroplast sequenced using Solexa.</title>
        <authorList>
            <person name="Kane N.C."/>
            <person name="Dempewolf H."/>
            <person name="Stewart M.L."/>
            <person name="Cronk Q."/>
            <person name="Rieseberrg L.H."/>
        </authorList>
    </citation>
    <scope>NUCLEOTIDE SEQUENCE [LARGE SCALE GENOMIC DNA]</scope>
    <source>
        <strain>cv. PI 508077</strain>
    </source>
</reference>
<protein>
    <recommendedName>
        <fullName evidence="1">Small ribosomal subunit protein bS18c</fullName>
    </recommendedName>
    <alternativeName>
        <fullName evidence="2">30S ribosomal protein S18, chloroplastic</fullName>
    </alternativeName>
</protein>
<name>RR18_GUIAB</name>
<sequence>MDKSKRTFLKSKRSFRKRLPPIQSGDRIDYKNMSLISRFISEQGKILSRRVNRLTLKQQRLITIAIKQARILSLLPFLNNEKQFERTESTTRTPSLRARKR</sequence>
<dbReference type="EMBL" id="EU549769">
    <property type="protein sequence ID" value="ACB86549.1"/>
    <property type="molecule type" value="Genomic_DNA"/>
</dbReference>
<dbReference type="RefSeq" id="YP_001837382.1">
    <property type="nucleotide sequence ID" value="NC_010601.1"/>
</dbReference>
<dbReference type="SMR" id="B2LML5"/>
<dbReference type="GeneID" id="6219172"/>
<dbReference type="GO" id="GO:0009507">
    <property type="term" value="C:chloroplast"/>
    <property type="evidence" value="ECO:0007669"/>
    <property type="project" value="UniProtKB-SubCell"/>
</dbReference>
<dbReference type="GO" id="GO:0005763">
    <property type="term" value="C:mitochondrial small ribosomal subunit"/>
    <property type="evidence" value="ECO:0007669"/>
    <property type="project" value="TreeGrafter"/>
</dbReference>
<dbReference type="GO" id="GO:0070181">
    <property type="term" value="F:small ribosomal subunit rRNA binding"/>
    <property type="evidence" value="ECO:0007669"/>
    <property type="project" value="TreeGrafter"/>
</dbReference>
<dbReference type="GO" id="GO:0003735">
    <property type="term" value="F:structural constituent of ribosome"/>
    <property type="evidence" value="ECO:0007669"/>
    <property type="project" value="InterPro"/>
</dbReference>
<dbReference type="GO" id="GO:0006412">
    <property type="term" value="P:translation"/>
    <property type="evidence" value="ECO:0007669"/>
    <property type="project" value="UniProtKB-UniRule"/>
</dbReference>
<dbReference type="FunFam" id="4.10.640.10:FF:000002">
    <property type="entry name" value="30S ribosomal protein S18, chloroplastic"/>
    <property type="match status" value="1"/>
</dbReference>
<dbReference type="Gene3D" id="4.10.640.10">
    <property type="entry name" value="Ribosomal protein S18"/>
    <property type="match status" value="1"/>
</dbReference>
<dbReference type="HAMAP" id="MF_00270">
    <property type="entry name" value="Ribosomal_bS18"/>
    <property type="match status" value="1"/>
</dbReference>
<dbReference type="InterPro" id="IPR001648">
    <property type="entry name" value="Ribosomal_bS18"/>
</dbReference>
<dbReference type="InterPro" id="IPR018275">
    <property type="entry name" value="Ribosomal_bS18_CS"/>
</dbReference>
<dbReference type="InterPro" id="IPR036870">
    <property type="entry name" value="Ribosomal_bS18_sf"/>
</dbReference>
<dbReference type="NCBIfam" id="TIGR00165">
    <property type="entry name" value="S18"/>
    <property type="match status" value="1"/>
</dbReference>
<dbReference type="PANTHER" id="PTHR13479">
    <property type="entry name" value="30S RIBOSOMAL PROTEIN S18"/>
    <property type="match status" value="1"/>
</dbReference>
<dbReference type="PANTHER" id="PTHR13479:SF40">
    <property type="entry name" value="SMALL RIBOSOMAL SUBUNIT PROTEIN BS18M"/>
    <property type="match status" value="1"/>
</dbReference>
<dbReference type="Pfam" id="PF01084">
    <property type="entry name" value="Ribosomal_S18"/>
    <property type="match status" value="1"/>
</dbReference>
<dbReference type="PRINTS" id="PR00974">
    <property type="entry name" value="RIBOSOMALS18"/>
</dbReference>
<dbReference type="SUPFAM" id="SSF46911">
    <property type="entry name" value="Ribosomal protein S18"/>
    <property type="match status" value="1"/>
</dbReference>
<dbReference type="PROSITE" id="PS00057">
    <property type="entry name" value="RIBOSOMAL_S18"/>
    <property type="match status" value="1"/>
</dbReference>
<proteinExistence type="inferred from homology"/>
<comment type="subunit">
    <text evidence="1">Part of the 30S ribosomal subunit.</text>
</comment>
<comment type="subcellular location">
    <subcellularLocation>
        <location>Plastid</location>
        <location>Chloroplast</location>
    </subcellularLocation>
</comment>
<comment type="similarity">
    <text evidence="1">Belongs to the bacterial ribosomal protein bS18 family.</text>
</comment>
<gene>
    <name evidence="1" type="primary">rps18</name>
    <name type="ordered locus">GuabCp043</name>
</gene>
<accession>B2LML5</accession>
<evidence type="ECO:0000255" key="1">
    <source>
        <dbReference type="HAMAP-Rule" id="MF_00270"/>
    </source>
</evidence>
<evidence type="ECO:0000305" key="2"/>
<organism>
    <name type="scientific">Guizotia abyssinica</name>
    <name type="common">Niger</name>
    <name type="synonym">Ramtilla</name>
    <dbReference type="NCBI Taxonomy" id="4230"/>
    <lineage>
        <taxon>Eukaryota</taxon>
        <taxon>Viridiplantae</taxon>
        <taxon>Streptophyta</taxon>
        <taxon>Embryophyta</taxon>
        <taxon>Tracheophyta</taxon>
        <taxon>Spermatophyta</taxon>
        <taxon>Magnoliopsida</taxon>
        <taxon>eudicotyledons</taxon>
        <taxon>Gunneridae</taxon>
        <taxon>Pentapetalae</taxon>
        <taxon>asterids</taxon>
        <taxon>campanulids</taxon>
        <taxon>Asterales</taxon>
        <taxon>Asteraceae</taxon>
        <taxon>Asteroideae</taxon>
        <taxon>Heliantheae alliance</taxon>
        <taxon>Millerieae</taxon>
        <taxon>Guizotia</taxon>
    </lineage>
</organism>
<feature type="chain" id="PRO_0000345586" description="Small ribosomal subunit protein bS18c">
    <location>
        <begin position="1"/>
        <end position="101"/>
    </location>
</feature>
<keyword id="KW-0150">Chloroplast</keyword>
<keyword id="KW-0934">Plastid</keyword>
<keyword id="KW-0687">Ribonucleoprotein</keyword>
<keyword id="KW-0689">Ribosomal protein</keyword>
<keyword id="KW-0694">RNA-binding</keyword>
<keyword id="KW-0699">rRNA-binding</keyword>